<organism>
    <name type="scientific">Bacillus thuringiensis</name>
    <dbReference type="NCBI Taxonomy" id="1428"/>
    <lineage>
        <taxon>Bacteria</taxon>
        <taxon>Bacillati</taxon>
        <taxon>Bacillota</taxon>
        <taxon>Bacilli</taxon>
        <taxon>Bacillales</taxon>
        <taxon>Bacillaceae</taxon>
        <taxon>Bacillus</taxon>
        <taxon>Bacillus cereus group</taxon>
    </lineage>
</organism>
<reference key="1">
    <citation type="submission" date="2016-03" db="EMBL/GenBank/DDBJ databases">
        <title>Complete Genome Sequence of Bacillus thuringiensis HD12.</title>
        <authorList>
            <person name="Shu C."/>
        </authorList>
    </citation>
    <scope>NUCLEOTIDE SEQUENCE [LARGE SCALE GENOMIC DNA]</scope>
    <source>
        <strain>HD12</strain>
    </source>
</reference>
<reference key="2">
    <citation type="journal article" date="2018" name="Science">
        <title>Systematic discovery of antiphage defense systems in the microbial pangenome.</title>
        <authorList>
            <person name="Doron S."/>
            <person name="Melamed S."/>
            <person name="Ofir G."/>
            <person name="Leavitt A."/>
            <person name="Lopatina A."/>
            <person name="Keren M."/>
            <person name="Amitai G."/>
            <person name="Sorek R."/>
        </authorList>
    </citation>
    <scope>FUNCTION</scope>
    <scope>EXPRESSION IN B.SUBTILIS</scope>
    <source>
        <strain>HD12</strain>
    </source>
</reference>
<dbReference type="EMBL" id="CP014847">
    <property type="protein sequence ID" value="AMR85049.1"/>
    <property type="molecule type" value="Genomic_DNA"/>
</dbReference>
<dbReference type="RefSeq" id="WP_044798012.1">
    <property type="nucleotide sequence ID" value="NZ_VLJD01000076.1"/>
</dbReference>
<dbReference type="GO" id="GO:0004519">
    <property type="term" value="F:endonuclease activity"/>
    <property type="evidence" value="ECO:0007669"/>
    <property type="project" value="InterPro"/>
</dbReference>
<dbReference type="GO" id="GO:0003676">
    <property type="term" value="F:nucleic acid binding"/>
    <property type="evidence" value="ECO:0007669"/>
    <property type="project" value="InterPro"/>
</dbReference>
<dbReference type="GO" id="GO:0008270">
    <property type="term" value="F:zinc ion binding"/>
    <property type="evidence" value="ECO:0007669"/>
    <property type="project" value="InterPro"/>
</dbReference>
<dbReference type="GO" id="GO:0051607">
    <property type="term" value="P:defense response to virus"/>
    <property type="evidence" value="ECO:0007669"/>
    <property type="project" value="UniProtKB-KW"/>
</dbReference>
<dbReference type="CDD" id="cd00085">
    <property type="entry name" value="HNHc"/>
    <property type="match status" value="1"/>
</dbReference>
<dbReference type="Gene3D" id="1.10.30.50">
    <property type="match status" value="1"/>
</dbReference>
<dbReference type="InterPro" id="IPR002711">
    <property type="entry name" value="HNH"/>
</dbReference>
<dbReference type="InterPro" id="IPR003615">
    <property type="entry name" value="HNH_nuc"/>
</dbReference>
<dbReference type="Pfam" id="PF01844">
    <property type="entry name" value="HNH"/>
    <property type="match status" value="1"/>
</dbReference>
<dbReference type="SMART" id="SM00507">
    <property type="entry name" value="HNHc"/>
    <property type="match status" value="1"/>
</dbReference>
<proteinExistence type="predicted"/>
<gene>
    <name evidence="3" type="primary">ptuB</name>
    <name evidence="5" type="ORF">A3L20_13825</name>
</gene>
<feature type="chain" id="PRO_0000456387" description="Septu protein PtuB">
    <location>
        <begin position="1"/>
        <end position="257"/>
    </location>
</feature>
<feature type="domain" description="HNH" evidence="1">
    <location>
        <begin position="49"/>
        <end position="96"/>
    </location>
</feature>
<sequence>MIHLKRPNSPSKLINEEAKLTQEFLQNGNSVWGKPYIKLALLEMSNNKCVYCECRLDEESKYMEVEHFLPKDTYPNLVVNWRNLLPSCKRCNGKKGTHDSKKEPIINPTVDTPSNHIKMFNYCLKGKDLKGKTTVDVLHLNQLDRLVYPRMLIGTKTIETVEKLLEMAENFNLNINATGRIKSRIIHGTTQLLIEAQPHSEYSATVASVLFNNEDFVKLKEIMIKCTIWNTEHQKLLSNAERNILVEPLYNCLNNKN</sequence>
<accession>P0DW42</accession>
<name>PTUB_BACTU</name>
<protein>
    <recommendedName>
        <fullName evidence="3">Septu protein PtuB</fullName>
    </recommendedName>
    <alternativeName>
        <fullName evidence="3">Putative nuclease PtuB</fullName>
    </alternativeName>
</protein>
<comment type="function">
    <text evidence="2 4">Component of antiviral defense system Septu type I, composed of PtuA and PtuB. Expression of Septu type I in B.subtilis (strain BEST7003) confers resistance to phages SBSphiC and SBSphiJ (PubMed:29371424). May be a nuclease (Probable).</text>
</comment>
<evidence type="ECO:0000255" key="1"/>
<evidence type="ECO:0000269" key="2">
    <source>
    </source>
</evidence>
<evidence type="ECO:0000303" key="3">
    <source>
    </source>
</evidence>
<evidence type="ECO:0000305" key="4">
    <source>
    </source>
</evidence>
<evidence type="ECO:0000312" key="5">
    <source>
        <dbReference type="EMBL" id="AMR85049.1"/>
    </source>
</evidence>
<keyword id="KW-0051">Antiviral defense</keyword>
<keyword id="KW-0378">Hydrolase</keyword>
<keyword id="KW-0540">Nuclease</keyword>